<proteinExistence type="inferred from homology"/>
<accession>Q03IU4</accession>
<dbReference type="EC" id="3.1.-.-" evidence="1"/>
<dbReference type="EC" id="3.6.4.-" evidence="1"/>
<dbReference type="EMBL" id="CP000419">
    <property type="protein sequence ID" value="ABJ66878.1"/>
    <property type="molecule type" value="Genomic_DNA"/>
</dbReference>
<dbReference type="RefSeq" id="WP_011681633.1">
    <property type="nucleotide sequence ID" value="NC_008532.1"/>
</dbReference>
<dbReference type="SMR" id="Q03IU4"/>
<dbReference type="KEGG" id="ste:STER_1737"/>
<dbReference type="HOGENOM" id="CLU_011252_2_1_9"/>
<dbReference type="GO" id="GO:0005524">
    <property type="term" value="F:ATP binding"/>
    <property type="evidence" value="ECO:0007669"/>
    <property type="project" value="UniProtKB-UniRule"/>
</dbReference>
<dbReference type="GO" id="GO:0016887">
    <property type="term" value="F:ATP hydrolysis activity"/>
    <property type="evidence" value="ECO:0007669"/>
    <property type="project" value="InterPro"/>
</dbReference>
<dbReference type="GO" id="GO:0140664">
    <property type="term" value="F:ATP-dependent DNA damage sensor activity"/>
    <property type="evidence" value="ECO:0007669"/>
    <property type="project" value="InterPro"/>
</dbReference>
<dbReference type="GO" id="GO:0004519">
    <property type="term" value="F:endonuclease activity"/>
    <property type="evidence" value="ECO:0007669"/>
    <property type="project" value="UniProtKB-UniRule"/>
</dbReference>
<dbReference type="GO" id="GO:0030983">
    <property type="term" value="F:mismatched DNA binding"/>
    <property type="evidence" value="ECO:0007669"/>
    <property type="project" value="InterPro"/>
</dbReference>
<dbReference type="GO" id="GO:0043023">
    <property type="term" value="F:ribosomal large subunit binding"/>
    <property type="evidence" value="ECO:0007669"/>
    <property type="project" value="UniProtKB-UniRule"/>
</dbReference>
<dbReference type="GO" id="GO:0019843">
    <property type="term" value="F:rRNA binding"/>
    <property type="evidence" value="ECO:0007669"/>
    <property type="project" value="UniProtKB-UniRule"/>
</dbReference>
<dbReference type="GO" id="GO:0006298">
    <property type="term" value="P:mismatch repair"/>
    <property type="evidence" value="ECO:0007669"/>
    <property type="project" value="InterPro"/>
</dbReference>
<dbReference type="GO" id="GO:0045910">
    <property type="term" value="P:negative regulation of DNA recombination"/>
    <property type="evidence" value="ECO:0007669"/>
    <property type="project" value="InterPro"/>
</dbReference>
<dbReference type="GO" id="GO:0072344">
    <property type="term" value="P:rescue of stalled ribosome"/>
    <property type="evidence" value="ECO:0007669"/>
    <property type="project" value="UniProtKB-UniRule"/>
</dbReference>
<dbReference type="CDD" id="cd03280">
    <property type="entry name" value="ABC_MutS2"/>
    <property type="match status" value="1"/>
</dbReference>
<dbReference type="FunFam" id="3.30.1370.110:FF:000004">
    <property type="entry name" value="Endonuclease MutS2"/>
    <property type="match status" value="1"/>
</dbReference>
<dbReference type="FunFam" id="3.40.50.300:FF:000830">
    <property type="entry name" value="Endonuclease MutS2"/>
    <property type="match status" value="1"/>
</dbReference>
<dbReference type="Gene3D" id="3.30.1370.110">
    <property type="match status" value="1"/>
</dbReference>
<dbReference type="Gene3D" id="3.40.50.300">
    <property type="entry name" value="P-loop containing nucleotide triphosphate hydrolases"/>
    <property type="match status" value="1"/>
</dbReference>
<dbReference type="HAMAP" id="MF_00092">
    <property type="entry name" value="MutS2"/>
    <property type="match status" value="1"/>
</dbReference>
<dbReference type="InterPro" id="IPR000432">
    <property type="entry name" value="DNA_mismatch_repair_MutS_C"/>
</dbReference>
<dbReference type="InterPro" id="IPR007696">
    <property type="entry name" value="DNA_mismatch_repair_MutS_core"/>
</dbReference>
<dbReference type="InterPro" id="IPR036187">
    <property type="entry name" value="DNA_mismatch_repair_MutS_sf"/>
</dbReference>
<dbReference type="InterPro" id="IPR046893">
    <property type="entry name" value="MSSS"/>
</dbReference>
<dbReference type="InterPro" id="IPR045076">
    <property type="entry name" value="MutS"/>
</dbReference>
<dbReference type="InterPro" id="IPR005747">
    <property type="entry name" value="MutS2"/>
</dbReference>
<dbReference type="InterPro" id="IPR027417">
    <property type="entry name" value="P-loop_NTPase"/>
</dbReference>
<dbReference type="InterPro" id="IPR002625">
    <property type="entry name" value="Smr_dom"/>
</dbReference>
<dbReference type="InterPro" id="IPR036063">
    <property type="entry name" value="Smr_dom_sf"/>
</dbReference>
<dbReference type="NCBIfam" id="TIGR01069">
    <property type="entry name" value="mutS2"/>
    <property type="match status" value="1"/>
</dbReference>
<dbReference type="PANTHER" id="PTHR48466:SF2">
    <property type="entry name" value="OS10G0509000 PROTEIN"/>
    <property type="match status" value="1"/>
</dbReference>
<dbReference type="PANTHER" id="PTHR48466">
    <property type="entry name" value="OS10G0509000 PROTEIN-RELATED"/>
    <property type="match status" value="1"/>
</dbReference>
<dbReference type="Pfam" id="PF20297">
    <property type="entry name" value="MSSS"/>
    <property type="match status" value="1"/>
</dbReference>
<dbReference type="Pfam" id="PF00488">
    <property type="entry name" value="MutS_V"/>
    <property type="match status" value="1"/>
</dbReference>
<dbReference type="Pfam" id="PF01713">
    <property type="entry name" value="Smr"/>
    <property type="match status" value="1"/>
</dbReference>
<dbReference type="PIRSF" id="PIRSF005814">
    <property type="entry name" value="MutS_YshD"/>
    <property type="match status" value="1"/>
</dbReference>
<dbReference type="SMART" id="SM00534">
    <property type="entry name" value="MUTSac"/>
    <property type="match status" value="1"/>
</dbReference>
<dbReference type="SMART" id="SM00533">
    <property type="entry name" value="MUTSd"/>
    <property type="match status" value="1"/>
</dbReference>
<dbReference type="SMART" id="SM00463">
    <property type="entry name" value="SMR"/>
    <property type="match status" value="1"/>
</dbReference>
<dbReference type="SUPFAM" id="SSF48334">
    <property type="entry name" value="DNA repair protein MutS, domain III"/>
    <property type="match status" value="1"/>
</dbReference>
<dbReference type="SUPFAM" id="SSF52540">
    <property type="entry name" value="P-loop containing nucleoside triphosphate hydrolases"/>
    <property type="match status" value="1"/>
</dbReference>
<dbReference type="SUPFAM" id="SSF160443">
    <property type="entry name" value="SMR domain-like"/>
    <property type="match status" value="1"/>
</dbReference>
<dbReference type="PROSITE" id="PS00486">
    <property type="entry name" value="DNA_MISMATCH_REPAIR_2"/>
    <property type="match status" value="1"/>
</dbReference>
<dbReference type="PROSITE" id="PS50828">
    <property type="entry name" value="SMR"/>
    <property type="match status" value="1"/>
</dbReference>
<gene>
    <name evidence="1" type="primary">mutS2</name>
    <name evidence="1" type="synonym">rqcU</name>
    <name type="ordered locus">STER_1737</name>
</gene>
<evidence type="ECO:0000255" key="1">
    <source>
        <dbReference type="HAMAP-Rule" id="MF_00092"/>
    </source>
</evidence>
<protein>
    <recommendedName>
        <fullName evidence="1">Endonuclease MutS2</fullName>
        <ecNumber evidence="1">3.1.-.-</ecNumber>
    </recommendedName>
    <alternativeName>
        <fullName evidence="1">Ribosome-associated protein quality control-upstream factor</fullName>
        <shortName evidence="1">RQC-upstream factor</shortName>
        <shortName evidence="1">RqcU</shortName>
        <ecNumber evidence="1">3.6.4.-</ecNumber>
    </alternativeName>
</protein>
<keyword id="KW-0067">ATP-binding</keyword>
<keyword id="KW-0238">DNA-binding</keyword>
<keyword id="KW-0255">Endonuclease</keyword>
<keyword id="KW-0378">Hydrolase</keyword>
<keyword id="KW-0540">Nuclease</keyword>
<keyword id="KW-0547">Nucleotide-binding</keyword>
<keyword id="KW-0694">RNA-binding</keyword>
<keyword id="KW-0699">rRNA-binding</keyword>
<feature type="chain" id="PRO_1000093407" description="Endonuclease MutS2">
    <location>
        <begin position="1"/>
        <end position="783"/>
    </location>
</feature>
<feature type="domain" description="Smr" evidence="1">
    <location>
        <begin position="708"/>
        <end position="783"/>
    </location>
</feature>
<feature type="binding site" evidence="1">
    <location>
        <begin position="328"/>
        <end position="335"/>
    </location>
    <ligand>
        <name>ATP</name>
        <dbReference type="ChEBI" id="CHEBI:30616"/>
    </ligand>
</feature>
<name>MUTS2_STRTD</name>
<organism>
    <name type="scientific">Streptococcus thermophilus (strain ATCC BAA-491 / LMD-9)</name>
    <dbReference type="NCBI Taxonomy" id="322159"/>
    <lineage>
        <taxon>Bacteria</taxon>
        <taxon>Bacillati</taxon>
        <taxon>Bacillota</taxon>
        <taxon>Bacilli</taxon>
        <taxon>Lactobacillales</taxon>
        <taxon>Streptococcaceae</taxon>
        <taxon>Streptococcus</taxon>
    </lineage>
</organism>
<reference key="1">
    <citation type="journal article" date="2006" name="Proc. Natl. Acad. Sci. U.S.A.">
        <title>Comparative genomics of the lactic acid bacteria.</title>
        <authorList>
            <person name="Makarova K.S."/>
            <person name="Slesarev A."/>
            <person name="Wolf Y.I."/>
            <person name="Sorokin A."/>
            <person name="Mirkin B."/>
            <person name="Koonin E.V."/>
            <person name="Pavlov A."/>
            <person name="Pavlova N."/>
            <person name="Karamychev V."/>
            <person name="Polouchine N."/>
            <person name="Shakhova V."/>
            <person name="Grigoriev I."/>
            <person name="Lou Y."/>
            <person name="Rohksar D."/>
            <person name="Lucas S."/>
            <person name="Huang K."/>
            <person name="Goodstein D.M."/>
            <person name="Hawkins T."/>
            <person name="Plengvidhya V."/>
            <person name="Welker D."/>
            <person name="Hughes J."/>
            <person name="Goh Y."/>
            <person name="Benson A."/>
            <person name="Baldwin K."/>
            <person name="Lee J.-H."/>
            <person name="Diaz-Muniz I."/>
            <person name="Dosti B."/>
            <person name="Smeianov V."/>
            <person name="Wechter W."/>
            <person name="Barabote R."/>
            <person name="Lorca G."/>
            <person name="Altermann E."/>
            <person name="Barrangou R."/>
            <person name="Ganesan B."/>
            <person name="Xie Y."/>
            <person name="Rawsthorne H."/>
            <person name="Tamir D."/>
            <person name="Parker C."/>
            <person name="Breidt F."/>
            <person name="Broadbent J.R."/>
            <person name="Hutkins R."/>
            <person name="O'Sullivan D."/>
            <person name="Steele J."/>
            <person name="Unlu G."/>
            <person name="Saier M.H. Jr."/>
            <person name="Klaenhammer T."/>
            <person name="Richardson P."/>
            <person name="Kozyavkin S."/>
            <person name="Weimer B.C."/>
            <person name="Mills D.A."/>
        </authorList>
    </citation>
    <scope>NUCLEOTIDE SEQUENCE [LARGE SCALE GENOMIC DNA]</scope>
    <source>
        <strain>ATCC BAA-491 / LMD-9</strain>
    </source>
</reference>
<sequence>MNTKILDQLEFNKVKDQFTEYLQTEQAQAELRDLVPMTNPERIQNQFTEIQEMSEIFIEHHGFAIGSLRDISEPLRRLELDADLNIQELIAIKKVLQASADLSRFYADLENVELIALKRLFEKIEAFPSLQGSLQSINDGGFIEHFASPELQNIRRQLKACDDAIRQTLQDILKKSGHMLAENLIASRNGRSVLPVKNTYRNRIAGVVHDISSSGNTVYIEPRAVIQLNEKITQLRADERHEMARILHELSDQLRPHTAAIANNAWILGHMDFIRGKYLYLHDKKAIIPEISDNQTLQLLNVRHPLLINPVANDLRFDEDLTVIVITGPNTGGKTVMLKTLGLAQLMAQSGLPILADKGSRVAIFQEIFADIGDEQSIEQSLSTFSSHMTHIVEILNTADSNSLVLVDELGAGTDPQEGASLAMAILEHLRLSQIKTMATTHYPELKAYGIETQHVENASMEFDTATLRPTYRFMQGVPGRSNAFEIARRLGLNEIIVKEAENLTDTDSDVNRIIEQLEAQTVETQKRLEHIKDVEQENLKFNRAVKKLYNEFSHEYDKELEKAQKEIQEMVDTALAESDSILKNLHDKSQLKPHEVIDAKGKLKKLAAQVDLSKNKVLRKAKKEKAARAPRVGDDIIVTAYGQRGTLTSQAKNGNWEAQVGLIKMSLKADEFTLVRAQAEAQQPKKKQINVVKKAKKTSSDGPRARLDLRGKRYEEAMQELDAFIDQALLNNMSQVEIIHGIGTGVIRDAVTKYLRRHRHVKNFEYAPQSAGGSGCTIATLG</sequence>
<comment type="function">
    <text evidence="1">Endonuclease that is involved in the suppression of homologous recombination and thus may have a key role in the control of bacterial genetic diversity.</text>
</comment>
<comment type="function">
    <text evidence="1">Acts as a ribosome collision sensor, splitting the ribosome into its 2 subunits. Detects stalled/collided 70S ribosomes which it binds and splits by an ATP-hydrolysis driven conformational change. Acts upstream of the ribosome quality control system (RQC), a ribosome-associated complex that mediates the extraction of incompletely synthesized nascent chains from stalled ribosomes and their subsequent degradation. Probably generates substrates for RQC.</text>
</comment>
<comment type="subunit">
    <text evidence="1">Homodimer. Binds to stalled ribosomes, contacting rRNA.</text>
</comment>
<comment type="similarity">
    <text evidence="1">Belongs to the DNA mismatch repair MutS family. MutS2 subfamily.</text>
</comment>